<evidence type="ECO:0000250" key="1"/>
<evidence type="ECO:0000250" key="2">
    <source>
        <dbReference type="UniProtKB" id="Q7Z4W1"/>
    </source>
</evidence>
<evidence type="ECO:0000255" key="3">
    <source>
        <dbReference type="PROSITE-ProRule" id="PRU10001"/>
    </source>
</evidence>
<evidence type="ECO:0000269" key="4">
    <source>
    </source>
</evidence>
<evidence type="ECO:0000269" key="5">
    <source>
    </source>
</evidence>
<evidence type="ECO:0000269" key="6">
    <source>
    </source>
</evidence>
<evidence type="ECO:0000305" key="7"/>
<organism>
    <name type="scientific">Mesocricetus auratus</name>
    <name type="common">Golden hamster</name>
    <dbReference type="NCBI Taxonomy" id="10036"/>
    <lineage>
        <taxon>Eukaryota</taxon>
        <taxon>Metazoa</taxon>
        <taxon>Chordata</taxon>
        <taxon>Craniata</taxon>
        <taxon>Vertebrata</taxon>
        <taxon>Euteleostomi</taxon>
        <taxon>Mammalia</taxon>
        <taxon>Eutheria</taxon>
        <taxon>Euarchontoglires</taxon>
        <taxon>Glires</taxon>
        <taxon>Rodentia</taxon>
        <taxon>Myomorpha</taxon>
        <taxon>Muroidea</taxon>
        <taxon>Cricetidae</taxon>
        <taxon>Cricetinae</taxon>
        <taxon>Mesocricetus</taxon>
    </lineage>
</organism>
<accession>Q91XV4</accession>
<sequence>MDLGLAGRRALVTGAGKGIGRSTVLALQAAGAHVVAVSRTQADLDSLVSECPGVETVCVDLADWEATEQALSSVGPVDLLVNNAAVALLQPFLEVTKEAFDMSFNVNLRAVIQVSQIVARGMIARGAPGAIVNVSSQASQRALANHSVYCSTKGALDMLTKMMALELGPHKIRVNAVNPTVVMTSMGRTNWSDPHKAKVMLDRIPLGKFAEVENVVDAILFLLSHRSNMTTGSTLPVDGGFLVT</sequence>
<protein>
    <recommendedName>
        <fullName>L-xylulose reductase</fullName>
        <shortName>XR</shortName>
        <ecNumber>1.1.1.10</ecNumber>
    </recommendedName>
    <alternativeName>
        <fullName>Dicarbonyl/L-xylulose reductase</fullName>
    </alternativeName>
    <alternativeName>
        <fullName>Sperm antigen P26h</fullName>
    </alternativeName>
</protein>
<name>DCXR_MESAU</name>
<keyword id="KW-0007">Acetylation</keyword>
<keyword id="KW-0119">Carbohydrate metabolism</keyword>
<keyword id="KW-0968">Cytoplasmic vesicle</keyword>
<keyword id="KW-0903">Direct protein sequencing</keyword>
<keyword id="KW-0313">Glucose metabolism</keyword>
<keyword id="KW-0472">Membrane</keyword>
<keyword id="KW-0488">Methylation</keyword>
<keyword id="KW-0521">NADP</keyword>
<keyword id="KW-0560">Oxidoreductase</keyword>
<keyword id="KW-0597">Phosphoprotein</keyword>
<keyword id="KW-1185">Reference proteome</keyword>
<keyword id="KW-0859">Xylose metabolism</keyword>
<proteinExistence type="evidence at protein level"/>
<gene>
    <name type="primary">DCXR</name>
</gene>
<feature type="chain" id="PRO_0000054555" description="L-xylulose reductase">
    <location>
        <begin position="1"/>
        <end position="244"/>
    </location>
</feature>
<feature type="active site" description="Proton acceptor" evidence="3">
    <location>
        <position position="149"/>
    </location>
</feature>
<feature type="active site" evidence="1">
    <location>
        <position position="153"/>
    </location>
</feature>
<feature type="binding site" evidence="1">
    <location>
        <begin position="11"/>
        <end position="39"/>
    </location>
    <ligand>
        <name>NADP(+)</name>
        <dbReference type="ChEBI" id="CHEBI:58349"/>
    </ligand>
</feature>
<feature type="binding site" evidence="1">
    <location>
        <position position="136"/>
    </location>
    <ligand>
        <name>substrate</name>
    </ligand>
</feature>
<feature type="modified residue" description="N-acetylmethionine" evidence="2">
    <location>
        <position position="1"/>
    </location>
</feature>
<feature type="modified residue" description="Omega-N-methylarginine" evidence="2">
    <location>
        <position position="21"/>
    </location>
</feature>
<feature type="modified residue" description="Phosphoserine" evidence="2">
    <location>
        <position position="46"/>
    </location>
</feature>
<comment type="function">
    <text>Catalyzes the NADPH-dependent reduction of several pentoses, tetroses, trioses, alpha-dicarbonyl compounds and L-xylulose. Participates in the uronate cycle of glucose metabolism. May play a role in the water absorption and cellular osmoregulation in the proximal renal tubules by producing xylitol, an osmolyte, thereby preventing osmolytic stress from occurring in the renal tubules.</text>
</comment>
<comment type="catalytic activity">
    <reaction evidence="5">
        <text>xylitol + NADP(+) = L-xylulose + NADPH + H(+)</text>
        <dbReference type="Rhea" id="RHEA:17025"/>
        <dbReference type="ChEBI" id="CHEBI:15378"/>
        <dbReference type="ChEBI" id="CHEBI:17151"/>
        <dbReference type="ChEBI" id="CHEBI:17399"/>
        <dbReference type="ChEBI" id="CHEBI:57783"/>
        <dbReference type="ChEBI" id="CHEBI:58349"/>
        <dbReference type="EC" id="1.1.1.10"/>
    </reaction>
</comment>
<comment type="subunit">
    <text>Homotetramer.</text>
</comment>
<comment type="subcellular location">
    <subcellularLocation>
        <location evidence="6">Membrane</location>
        <topology evidence="6">Peripheral membrane protein</topology>
    </subcellularLocation>
    <subcellularLocation>
        <location evidence="6">Cytoplasmic vesicle</location>
        <location evidence="6">Secretory vesicle</location>
        <location evidence="6">Acrosome</location>
    </subcellularLocation>
    <text>Probably recruited to membranes via an interaction with phosphatidylinositol. During epididymal transit, it accumulates on the acrosomal cap of spermatozoa.</text>
</comment>
<comment type="tissue specificity">
    <text evidence="4 5 6">Highly expressed in kidney and liver. Expressed in epididymis. Weakly expressed in brain, heart, lung, spleen and testis.</text>
</comment>
<comment type="similarity">
    <text evidence="7">Belongs to the short-chain dehydrogenases/reductases (SDR) family.</text>
</comment>
<reference key="1">
    <citation type="journal article" date="2001" name="Chem. Biol. Interact.">
        <title>Molecular cloning, expression and tissue distribution of hamster diacetyl reductase. Identity with L-xylulose reductase.</title>
        <authorList>
            <person name="Ishikura S."/>
            <person name="Isaji T."/>
            <person name="Usami N."/>
            <person name="Kitahara K."/>
            <person name="Nakagawa J."/>
            <person name="Hara A."/>
        </authorList>
    </citation>
    <scope>NUCLEOTIDE SEQUENCE [MRNA]</scope>
    <scope>PROTEIN SEQUENCE OF 154-169; 172-184 AND 199-223</scope>
    <scope>HOMOTETRAMERIZATION</scope>
    <scope>TISSUE SPECIFICITY</scope>
</reference>
<reference key="2">
    <citation type="journal article" date="2002" name="J. Biol. Chem.">
        <title>Molecular characterization of mammalian dicarbonyl/L-xylulose reductase and its localization in kidney.</title>
        <authorList>
            <person name="Nakagawa J."/>
            <person name="Ishikura S."/>
            <person name="Asami J."/>
            <person name="Isaji T."/>
            <person name="Usami N."/>
            <person name="Hara A."/>
            <person name="Sakurai T."/>
            <person name="Tsuritani K."/>
            <person name="Oda K."/>
            <person name="Takahashi M."/>
            <person name="Yoshimoto M."/>
            <person name="Otsuka N."/>
            <person name="Kitamura K."/>
        </authorList>
    </citation>
    <scope>NUCLEOTIDE SEQUENCE [MRNA]</scope>
    <scope>ENZYME ACTIVITY</scope>
    <scope>TISSUE SPECIFICITY</scope>
    <source>
        <strain>Syrian</strain>
        <tissue>Liver</tissue>
    </source>
</reference>
<reference key="3">
    <citation type="journal article" date="1999" name="Mol. Reprod. Dev.">
        <title>Hamster sperm antigen P26h is a phosphatidylinositol-anchored protein.</title>
        <authorList>
            <person name="Legare C."/>
            <person name="Berube B."/>
            <person name="Boue F."/>
            <person name="Lefievre L."/>
            <person name="Morales C.R."/>
            <person name="El-Alfy M."/>
            <person name="Sullivan R."/>
        </authorList>
    </citation>
    <scope>SUBCELLULAR LOCATION</scope>
    <scope>TISSUE SPECIFICITY</scope>
</reference>
<dbReference type="EC" id="1.1.1.10"/>
<dbReference type="EMBL" id="AB045204">
    <property type="protein sequence ID" value="BAB61727.1"/>
    <property type="molecule type" value="mRNA"/>
</dbReference>
<dbReference type="RefSeq" id="NP_001268340.1">
    <property type="nucleotide sequence ID" value="NM_001281411.1"/>
</dbReference>
<dbReference type="SMR" id="Q91XV4"/>
<dbReference type="STRING" id="10036.ENSMAUP00000008903"/>
<dbReference type="Ensembl" id="ENSMAUT00000012743">
    <property type="protein sequence ID" value="ENSMAUP00000008903"/>
    <property type="gene ID" value="ENSMAUG00000010205"/>
</dbReference>
<dbReference type="GeneID" id="101835313"/>
<dbReference type="KEGG" id="maua:101835313"/>
<dbReference type="CTD" id="51181"/>
<dbReference type="eggNOG" id="KOG1207">
    <property type="taxonomic scope" value="Eukaryota"/>
</dbReference>
<dbReference type="OrthoDB" id="1393670at2759"/>
<dbReference type="BioCyc" id="MetaCyc:MONOMER-13240"/>
<dbReference type="BRENDA" id="1.1.1.10">
    <property type="organism ID" value="3239"/>
</dbReference>
<dbReference type="SABIO-RK" id="Q91XV4"/>
<dbReference type="Proteomes" id="UP000189706">
    <property type="component" value="Unplaced"/>
</dbReference>
<dbReference type="GO" id="GO:0001669">
    <property type="term" value="C:acrosomal vesicle"/>
    <property type="evidence" value="ECO:0007669"/>
    <property type="project" value="UniProtKB-SubCell"/>
</dbReference>
<dbReference type="GO" id="GO:0005903">
    <property type="term" value="C:brush border"/>
    <property type="evidence" value="ECO:0007669"/>
    <property type="project" value="Ensembl"/>
</dbReference>
<dbReference type="GO" id="GO:0005881">
    <property type="term" value="C:cytoplasmic microtubule"/>
    <property type="evidence" value="ECO:0000250"/>
    <property type="project" value="UniProtKB"/>
</dbReference>
<dbReference type="GO" id="GO:0005829">
    <property type="term" value="C:cytosol"/>
    <property type="evidence" value="ECO:0007669"/>
    <property type="project" value="Ensembl"/>
</dbReference>
<dbReference type="GO" id="GO:0016020">
    <property type="term" value="C:membrane"/>
    <property type="evidence" value="ECO:0007669"/>
    <property type="project" value="UniProtKB-SubCell"/>
</dbReference>
<dbReference type="GO" id="GO:0005902">
    <property type="term" value="C:microvillus"/>
    <property type="evidence" value="ECO:0007669"/>
    <property type="project" value="Ensembl"/>
</dbReference>
<dbReference type="GO" id="GO:0004090">
    <property type="term" value="F:carbonyl reductase (NADPH) activity"/>
    <property type="evidence" value="ECO:0007669"/>
    <property type="project" value="TreeGrafter"/>
</dbReference>
<dbReference type="GO" id="GO:0042802">
    <property type="term" value="F:identical protein binding"/>
    <property type="evidence" value="ECO:0007669"/>
    <property type="project" value="Ensembl"/>
</dbReference>
<dbReference type="GO" id="GO:0050038">
    <property type="term" value="F:L-xylulose reductase (NADPH) activity"/>
    <property type="evidence" value="ECO:0000314"/>
    <property type="project" value="UniProtKB"/>
</dbReference>
<dbReference type="GO" id="GO:0016655">
    <property type="term" value="F:oxidoreductase activity, acting on NAD(P)H, quinone or similar compound as acceptor"/>
    <property type="evidence" value="ECO:0007669"/>
    <property type="project" value="Ensembl"/>
</dbReference>
<dbReference type="GO" id="GO:0019640">
    <property type="term" value="P:D-glucuronate catabolic process to D-xylulose 5-phosphate"/>
    <property type="evidence" value="ECO:0007669"/>
    <property type="project" value="Ensembl"/>
</dbReference>
<dbReference type="GO" id="GO:0042732">
    <property type="term" value="P:D-xylose metabolic process"/>
    <property type="evidence" value="ECO:0007669"/>
    <property type="project" value="UniProtKB-KW"/>
</dbReference>
<dbReference type="GO" id="GO:0006006">
    <property type="term" value="P:glucose metabolic process"/>
    <property type="evidence" value="ECO:0000314"/>
    <property type="project" value="UniProtKB"/>
</dbReference>
<dbReference type="GO" id="GO:0006739">
    <property type="term" value="P:NADP metabolic process"/>
    <property type="evidence" value="ECO:0007669"/>
    <property type="project" value="Ensembl"/>
</dbReference>
<dbReference type="GO" id="GO:2000379">
    <property type="term" value="P:positive regulation of reactive oxygen species metabolic process"/>
    <property type="evidence" value="ECO:0007669"/>
    <property type="project" value="Ensembl"/>
</dbReference>
<dbReference type="GO" id="GO:0005997">
    <property type="term" value="P:xylulose metabolic process"/>
    <property type="evidence" value="ECO:0000314"/>
    <property type="project" value="UniProtKB"/>
</dbReference>
<dbReference type="CDD" id="cd05351">
    <property type="entry name" value="XR_like_SDR_c"/>
    <property type="match status" value="1"/>
</dbReference>
<dbReference type="FunFam" id="3.40.50.720:FF:000214">
    <property type="entry name" value="L-xylulose reductase"/>
    <property type="match status" value="1"/>
</dbReference>
<dbReference type="Gene3D" id="3.40.50.720">
    <property type="entry name" value="NAD(P)-binding Rossmann-like Domain"/>
    <property type="match status" value="1"/>
</dbReference>
<dbReference type="InterPro" id="IPR051737">
    <property type="entry name" value="L-xylulose/Carbonyl_redctase"/>
</dbReference>
<dbReference type="InterPro" id="IPR036291">
    <property type="entry name" value="NAD(P)-bd_dom_sf"/>
</dbReference>
<dbReference type="InterPro" id="IPR020904">
    <property type="entry name" value="Sc_DH/Rdtase_CS"/>
</dbReference>
<dbReference type="InterPro" id="IPR002347">
    <property type="entry name" value="SDR_fam"/>
</dbReference>
<dbReference type="PANTHER" id="PTHR44252">
    <property type="entry name" value="D-ERYTHRULOSE REDUCTASE"/>
    <property type="match status" value="1"/>
</dbReference>
<dbReference type="PANTHER" id="PTHR44252:SF2">
    <property type="entry name" value="L-XYLULOSE REDUCTASE"/>
    <property type="match status" value="1"/>
</dbReference>
<dbReference type="Pfam" id="PF13561">
    <property type="entry name" value="adh_short_C2"/>
    <property type="match status" value="1"/>
</dbReference>
<dbReference type="PRINTS" id="PR00081">
    <property type="entry name" value="GDHRDH"/>
</dbReference>
<dbReference type="PRINTS" id="PR00080">
    <property type="entry name" value="SDRFAMILY"/>
</dbReference>
<dbReference type="SUPFAM" id="SSF51735">
    <property type="entry name" value="NAD(P)-binding Rossmann-fold domains"/>
    <property type="match status" value="1"/>
</dbReference>
<dbReference type="PROSITE" id="PS00061">
    <property type="entry name" value="ADH_SHORT"/>
    <property type="match status" value="1"/>
</dbReference>